<organism>
    <name type="scientific">Rhizobium etli (strain ATCC 51251 / DSM 11541 / JCM 21823 / NBRC 15573 / CFN 42)</name>
    <dbReference type="NCBI Taxonomy" id="347834"/>
    <lineage>
        <taxon>Bacteria</taxon>
        <taxon>Pseudomonadati</taxon>
        <taxon>Pseudomonadota</taxon>
        <taxon>Alphaproteobacteria</taxon>
        <taxon>Hyphomicrobiales</taxon>
        <taxon>Rhizobiaceae</taxon>
        <taxon>Rhizobium/Agrobacterium group</taxon>
        <taxon>Rhizobium</taxon>
    </lineage>
</organism>
<feature type="chain" id="PRO_0000241796" description="Glycogen synthase">
    <location>
        <begin position="1"/>
        <end position="480"/>
    </location>
</feature>
<accession>Q2K485</accession>
<dbReference type="EC" id="2.4.1.21" evidence="1"/>
<dbReference type="EMBL" id="CP000133">
    <property type="protein sequence ID" value="ABC92351.1"/>
    <property type="status" value="ALT_INIT"/>
    <property type="molecule type" value="Genomic_DNA"/>
</dbReference>
<dbReference type="RefSeq" id="WP_042119019.1">
    <property type="nucleotide sequence ID" value="NC_007761.1"/>
</dbReference>
<dbReference type="SMR" id="Q2K485"/>
<dbReference type="CAZy" id="GT5">
    <property type="family name" value="Glycosyltransferase Family 5"/>
</dbReference>
<dbReference type="KEGG" id="ret:RHE_CH03596"/>
<dbReference type="eggNOG" id="COG0297">
    <property type="taxonomic scope" value="Bacteria"/>
</dbReference>
<dbReference type="HOGENOM" id="CLU_009583_18_4_5"/>
<dbReference type="OrthoDB" id="9808590at2"/>
<dbReference type="UniPathway" id="UPA00164"/>
<dbReference type="Proteomes" id="UP000001936">
    <property type="component" value="Chromosome"/>
</dbReference>
<dbReference type="GO" id="GO:0005829">
    <property type="term" value="C:cytosol"/>
    <property type="evidence" value="ECO:0007669"/>
    <property type="project" value="TreeGrafter"/>
</dbReference>
<dbReference type="GO" id="GO:0009011">
    <property type="term" value="F:alpha-1,4-glucan glucosyltransferase (ADP-glucose donor) activity"/>
    <property type="evidence" value="ECO:0007669"/>
    <property type="project" value="UniProtKB-UniRule"/>
</dbReference>
<dbReference type="GO" id="GO:0004373">
    <property type="term" value="F:alpha-1,4-glucan glucosyltransferase (UDP-glucose donor) activity"/>
    <property type="evidence" value="ECO:0007669"/>
    <property type="project" value="InterPro"/>
</dbReference>
<dbReference type="GO" id="GO:0005978">
    <property type="term" value="P:glycogen biosynthetic process"/>
    <property type="evidence" value="ECO:0007669"/>
    <property type="project" value="UniProtKB-UniRule"/>
</dbReference>
<dbReference type="CDD" id="cd03791">
    <property type="entry name" value="GT5_Glycogen_synthase_DULL1-like"/>
    <property type="match status" value="1"/>
</dbReference>
<dbReference type="Gene3D" id="3.40.50.2000">
    <property type="entry name" value="Glycogen Phosphorylase B"/>
    <property type="match status" value="2"/>
</dbReference>
<dbReference type="HAMAP" id="MF_00484">
    <property type="entry name" value="Glycogen_synth"/>
    <property type="match status" value="1"/>
</dbReference>
<dbReference type="InterPro" id="IPR001296">
    <property type="entry name" value="Glyco_trans_1"/>
</dbReference>
<dbReference type="InterPro" id="IPR011835">
    <property type="entry name" value="GS/SS"/>
</dbReference>
<dbReference type="InterPro" id="IPR013534">
    <property type="entry name" value="Starch_synth_cat_dom"/>
</dbReference>
<dbReference type="NCBIfam" id="TIGR02095">
    <property type="entry name" value="glgA"/>
    <property type="match status" value="1"/>
</dbReference>
<dbReference type="NCBIfam" id="NF001899">
    <property type="entry name" value="PRK00654.1-2"/>
    <property type="match status" value="1"/>
</dbReference>
<dbReference type="PANTHER" id="PTHR45825:SF11">
    <property type="entry name" value="ALPHA AMYLASE DOMAIN-CONTAINING PROTEIN"/>
    <property type="match status" value="1"/>
</dbReference>
<dbReference type="PANTHER" id="PTHR45825">
    <property type="entry name" value="GRANULE-BOUND STARCH SYNTHASE 1, CHLOROPLASTIC/AMYLOPLASTIC"/>
    <property type="match status" value="1"/>
</dbReference>
<dbReference type="Pfam" id="PF08323">
    <property type="entry name" value="Glyco_transf_5"/>
    <property type="match status" value="1"/>
</dbReference>
<dbReference type="Pfam" id="PF00534">
    <property type="entry name" value="Glycos_transf_1"/>
    <property type="match status" value="1"/>
</dbReference>
<dbReference type="SUPFAM" id="SSF53756">
    <property type="entry name" value="UDP-Glycosyltransferase/glycogen phosphorylase"/>
    <property type="match status" value="1"/>
</dbReference>
<reference key="1">
    <citation type="journal article" date="2006" name="Proc. Natl. Acad. Sci. U.S.A.">
        <title>The partitioned Rhizobium etli genome: genetic and metabolic redundancy in seven interacting replicons.</title>
        <authorList>
            <person name="Gonzalez V."/>
            <person name="Santamaria R.I."/>
            <person name="Bustos P."/>
            <person name="Hernandez-Gonzalez I."/>
            <person name="Medrano-Soto A."/>
            <person name="Moreno-Hagelsieb G."/>
            <person name="Janga S.C."/>
            <person name="Ramirez M.A."/>
            <person name="Jimenez-Jacinto V."/>
            <person name="Collado-Vides J."/>
            <person name="Davila G."/>
        </authorList>
    </citation>
    <scope>NUCLEOTIDE SEQUENCE [LARGE SCALE GENOMIC DNA]</scope>
    <source>
        <strain>ATCC 51251 / DSM 11541 / JCM 21823 / NBRC 15573 / CFN 42</strain>
    </source>
</reference>
<sequence>MKVLSVSSEVFPLIKTGGLADVSGALPIALKAFGVETKTLLPGYPAVMKVIRDPVVRLEFPDLLGERATVLEVDHEGLDLLVLDAPAYYDRPGGPYLDPLGKDYPDNWRRFAALSLAASEIGAGLLPGWRPDLVHTHDWQAALTSVYMRYYPTPELPSVLTIHNIAFQGQFGSEIFPGLRLPDHAFAIDGVEYYGTTGFLKGGLQTAHAITTVSPTYADEILTPEFGMGLEGVIATRIDDLHGIVNGIDTDVWNPATDPVVHTHYGPTTLKNREENRRSIAEFFHLDNDDAPIFCVISRLTWQKGMDIVANVADRIVAMGGKLVVLGSGEAALEGALLASASRNPGRIGVSIGYNEPMSHLMQAGCDAIIIPSRFEPCGLTQLYALRYGCVPIVARTGGLNDTVIDANHAALAAKVATGIQFSPVTETGMLQAIRRAMHFYADRKLWTQLQKQGMKSDVSWEKSAERYAALYSSLVSKGM</sequence>
<protein>
    <recommendedName>
        <fullName evidence="1">Glycogen synthase</fullName>
        <ecNumber evidence="1">2.4.1.21</ecNumber>
    </recommendedName>
    <alternativeName>
        <fullName evidence="1">Starch [bacterial glycogen] synthase</fullName>
    </alternativeName>
</protein>
<comment type="function">
    <text evidence="1">Synthesizes alpha-1,4-glucan chains using ADP-glucose.</text>
</comment>
<comment type="catalytic activity">
    <reaction evidence="1">
        <text>[(1-&gt;4)-alpha-D-glucosyl](n) + ADP-alpha-D-glucose = [(1-&gt;4)-alpha-D-glucosyl](n+1) + ADP + H(+)</text>
        <dbReference type="Rhea" id="RHEA:18189"/>
        <dbReference type="Rhea" id="RHEA-COMP:9584"/>
        <dbReference type="Rhea" id="RHEA-COMP:9587"/>
        <dbReference type="ChEBI" id="CHEBI:15378"/>
        <dbReference type="ChEBI" id="CHEBI:15444"/>
        <dbReference type="ChEBI" id="CHEBI:57498"/>
        <dbReference type="ChEBI" id="CHEBI:456216"/>
        <dbReference type="EC" id="2.4.1.21"/>
    </reaction>
</comment>
<comment type="pathway">
    <text evidence="1">Glycan biosynthesis; glycogen biosynthesis.</text>
</comment>
<comment type="similarity">
    <text evidence="1">Belongs to the glycosyltransferase 1 family. Bacterial/plant glycogen synthase subfamily.</text>
</comment>
<comment type="sequence caution" evidence="2">
    <conflict type="erroneous initiation">
        <sequence resource="EMBL-CDS" id="ABC92351"/>
    </conflict>
</comment>
<name>GLGA_RHIEC</name>
<keyword id="KW-0320">Glycogen biosynthesis</keyword>
<keyword id="KW-0328">Glycosyltransferase</keyword>
<keyword id="KW-1185">Reference proteome</keyword>
<keyword id="KW-0808">Transferase</keyword>
<evidence type="ECO:0000255" key="1">
    <source>
        <dbReference type="HAMAP-Rule" id="MF_00484"/>
    </source>
</evidence>
<evidence type="ECO:0000305" key="2"/>
<proteinExistence type="inferred from homology"/>
<gene>
    <name evidence="1" type="primary">glgA</name>
    <name type="ordered locus">RHE_CH03596</name>
</gene>